<gene>
    <name evidence="1" type="primary">ilvD</name>
    <name type="ordered locus">BUAP5A_592</name>
</gene>
<keyword id="KW-0001">2Fe-2S</keyword>
<keyword id="KW-0028">Amino-acid biosynthesis</keyword>
<keyword id="KW-0100">Branched-chain amino acid biosynthesis</keyword>
<keyword id="KW-0408">Iron</keyword>
<keyword id="KW-0411">Iron-sulfur</keyword>
<keyword id="KW-0456">Lyase</keyword>
<keyword id="KW-0460">Magnesium</keyword>
<keyword id="KW-0479">Metal-binding</keyword>
<name>ILVD_BUCA5</name>
<comment type="function">
    <text evidence="1">Functions in the biosynthesis of branched-chain amino acids. Catalyzes the dehydration of (2R,3R)-2,3-dihydroxy-3-methylpentanoate (2,3-dihydroxy-3-methylvalerate) into 2-oxo-3-methylpentanoate (2-oxo-3-methylvalerate) and of (2R)-2,3-dihydroxy-3-methylbutanoate (2,3-dihydroxyisovalerate) into 2-oxo-3-methylbutanoate (2-oxoisovalerate), the penultimate precursor to L-isoleucine and L-valine, respectively.</text>
</comment>
<comment type="catalytic activity">
    <reaction evidence="1">
        <text>(2R)-2,3-dihydroxy-3-methylbutanoate = 3-methyl-2-oxobutanoate + H2O</text>
        <dbReference type="Rhea" id="RHEA:24809"/>
        <dbReference type="ChEBI" id="CHEBI:11851"/>
        <dbReference type="ChEBI" id="CHEBI:15377"/>
        <dbReference type="ChEBI" id="CHEBI:49072"/>
        <dbReference type="EC" id="4.2.1.9"/>
    </reaction>
    <physiologicalReaction direction="left-to-right" evidence="1">
        <dbReference type="Rhea" id="RHEA:24810"/>
    </physiologicalReaction>
</comment>
<comment type="catalytic activity">
    <reaction evidence="1">
        <text>(2R,3R)-2,3-dihydroxy-3-methylpentanoate = (S)-3-methyl-2-oxopentanoate + H2O</text>
        <dbReference type="Rhea" id="RHEA:27694"/>
        <dbReference type="ChEBI" id="CHEBI:15377"/>
        <dbReference type="ChEBI" id="CHEBI:35146"/>
        <dbReference type="ChEBI" id="CHEBI:49258"/>
        <dbReference type="EC" id="4.2.1.9"/>
    </reaction>
    <physiologicalReaction direction="left-to-right" evidence="1">
        <dbReference type="Rhea" id="RHEA:27695"/>
    </physiologicalReaction>
</comment>
<comment type="cofactor">
    <cofactor evidence="1">
        <name>[2Fe-2S] cluster</name>
        <dbReference type="ChEBI" id="CHEBI:190135"/>
    </cofactor>
    <text evidence="1">Binds 1 [2Fe-2S] cluster per subunit. This cluster acts as a Lewis acid cofactor.</text>
</comment>
<comment type="cofactor">
    <cofactor evidence="1">
        <name>Mg(2+)</name>
        <dbReference type="ChEBI" id="CHEBI:18420"/>
    </cofactor>
</comment>
<comment type="pathway">
    <text evidence="1">Amino-acid biosynthesis; L-isoleucine biosynthesis; L-isoleucine from 2-oxobutanoate: step 3/4.</text>
</comment>
<comment type="pathway">
    <text evidence="1">Amino-acid biosynthesis; L-valine biosynthesis; L-valine from pyruvate: step 3/4.</text>
</comment>
<comment type="subunit">
    <text evidence="1">Homodimer.</text>
</comment>
<comment type="similarity">
    <text evidence="1">Belongs to the IlvD/Edd family.</text>
</comment>
<evidence type="ECO:0000255" key="1">
    <source>
        <dbReference type="HAMAP-Rule" id="MF_00012"/>
    </source>
</evidence>
<accession>B8D8F8</accession>
<organism>
    <name type="scientific">Buchnera aphidicola subsp. Acyrthosiphon pisum (strain 5A)</name>
    <dbReference type="NCBI Taxonomy" id="563178"/>
    <lineage>
        <taxon>Bacteria</taxon>
        <taxon>Pseudomonadati</taxon>
        <taxon>Pseudomonadota</taxon>
        <taxon>Gammaproteobacteria</taxon>
        <taxon>Enterobacterales</taxon>
        <taxon>Erwiniaceae</taxon>
        <taxon>Buchnera</taxon>
    </lineage>
</organism>
<proteinExistence type="inferred from homology"/>
<feature type="chain" id="PRO_1000190653" description="Dihydroxy-acid dehydratase">
    <location>
        <begin position="1"/>
        <end position="617"/>
    </location>
</feature>
<feature type="active site" description="Proton acceptor" evidence="1">
    <location>
        <position position="517"/>
    </location>
</feature>
<feature type="binding site" evidence="1">
    <location>
        <position position="81"/>
    </location>
    <ligand>
        <name>Mg(2+)</name>
        <dbReference type="ChEBI" id="CHEBI:18420"/>
    </ligand>
</feature>
<feature type="binding site" evidence="1">
    <location>
        <position position="122"/>
    </location>
    <ligand>
        <name>[2Fe-2S] cluster</name>
        <dbReference type="ChEBI" id="CHEBI:190135"/>
    </ligand>
</feature>
<feature type="binding site" evidence="1">
    <location>
        <position position="123"/>
    </location>
    <ligand>
        <name>Mg(2+)</name>
        <dbReference type="ChEBI" id="CHEBI:18420"/>
    </ligand>
</feature>
<feature type="binding site" description="via carbamate group" evidence="1">
    <location>
        <position position="124"/>
    </location>
    <ligand>
        <name>Mg(2+)</name>
        <dbReference type="ChEBI" id="CHEBI:18420"/>
    </ligand>
</feature>
<feature type="binding site" evidence="1">
    <location>
        <position position="195"/>
    </location>
    <ligand>
        <name>[2Fe-2S] cluster</name>
        <dbReference type="ChEBI" id="CHEBI:190135"/>
    </ligand>
</feature>
<feature type="binding site" evidence="1">
    <location>
        <position position="491"/>
    </location>
    <ligand>
        <name>Mg(2+)</name>
        <dbReference type="ChEBI" id="CHEBI:18420"/>
    </ligand>
</feature>
<feature type="modified residue" description="N6-carboxylysine" evidence="1">
    <location>
        <position position="124"/>
    </location>
</feature>
<sequence length="617" mass="67356">MPKYRSFTTTQGRNMSGARSLWRATGMTEKDFTKPIIAVVNSFSQFVPGHIHLQEVGKLICGEIQKSGGVAKEFNTIAIDDGIAMGHSGMLYSLPSRELIADSIEYVVNAHCADAMICISNCDKITPGMLMASLRLNIPSVFISGGPMEAGKIQKNNKTIKIDLVDAIINGGKSHISDDFIKDIEASACPTCGSCSGMFTANSMNCLTEAIGLALPGNGTLLATHIDRKNLFIKSAQIIVKITEDYYKKNNTNVLPRNIANKESFENAMMLDIAMGGSTNTILHLLAAAQEAKVDFKMSNINKLSKKIPHICKVAPSTSLYHVEDVHRAGGVMGILGELNRFNLLHKNTRNILQLNLEETLDEYDIFSTNNPDVINMFQAGPGGIRTTKAYSQNFRWTRLDYDRKNGCIRSCKHAYSQDGGLAILYGNLAKNGCIIKTAGIDAKNYIFSGVAKVYESQEEAASSILNGEIISGDIIVIRYEGPKGGPGMQEMLYPTTYLKSMNLDKTCALITDGRFSGGTSGISIGHISPEAANKGIIALVKNGDIININIPERTIHLNITEKELSHRILQEESKGPLSYKPHSRKRYISSALKAYAFFSTSADQGAVRDYKKISNI</sequence>
<reference key="1">
    <citation type="journal article" date="2009" name="Science">
        <title>The dynamics and time scale of ongoing genomic erosion in symbiotic bacteria.</title>
        <authorList>
            <person name="Moran N.A."/>
            <person name="McLaughlin H.J."/>
            <person name="Sorek R."/>
        </authorList>
    </citation>
    <scope>NUCLEOTIDE SEQUENCE [LARGE SCALE GENOMIC DNA]</scope>
    <source>
        <strain>5A</strain>
    </source>
</reference>
<dbReference type="EC" id="4.2.1.9" evidence="1"/>
<dbReference type="EMBL" id="CP001161">
    <property type="protein sequence ID" value="ACL30934.1"/>
    <property type="molecule type" value="Genomic_DNA"/>
</dbReference>
<dbReference type="RefSeq" id="WP_009874548.1">
    <property type="nucleotide sequence ID" value="NC_011833.1"/>
</dbReference>
<dbReference type="SMR" id="B8D8F8"/>
<dbReference type="KEGG" id="bap:BUAP5A_592"/>
<dbReference type="HOGENOM" id="CLU_014271_4_2_6"/>
<dbReference type="OrthoDB" id="9807077at2"/>
<dbReference type="UniPathway" id="UPA00047">
    <property type="reaction ID" value="UER00057"/>
</dbReference>
<dbReference type="UniPathway" id="UPA00049">
    <property type="reaction ID" value="UER00061"/>
</dbReference>
<dbReference type="Proteomes" id="UP000006904">
    <property type="component" value="Chromosome"/>
</dbReference>
<dbReference type="GO" id="GO:0005829">
    <property type="term" value="C:cytosol"/>
    <property type="evidence" value="ECO:0007669"/>
    <property type="project" value="TreeGrafter"/>
</dbReference>
<dbReference type="GO" id="GO:0051537">
    <property type="term" value="F:2 iron, 2 sulfur cluster binding"/>
    <property type="evidence" value="ECO:0007669"/>
    <property type="project" value="UniProtKB-UniRule"/>
</dbReference>
<dbReference type="GO" id="GO:0004160">
    <property type="term" value="F:dihydroxy-acid dehydratase activity"/>
    <property type="evidence" value="ECO:0007669"/>
    <property type="project" value="UniProtKB-UniRule"/>
</dbReference>
<dbReference type="GO" id="GO:0000287">
    <property type="term" value="F:magnesium ion binding"/>
    <property type="evidence" value="ECO:0007669"/>
    <property type="project" value="UniProtKB-UniRule"/>
</dbReference>
<dbReference type="GO" id="GO:0009097">
    <property type="term" value="P:isoleucine biosynthetic process"/>
    <property type="evidence" value="ECO:0007669"/>
    <property type="project" value="UniProtKB-UniRule"/>
</dbReference>
<dbReference type="GO" id="GO:0009099">
    <property type="term" value="P:L-valine biosynthetic process"/>
    <property type="evidence" value="ECO:0007669"/>
    <property type="project" value="UniProtKB-UniRule"/>
</dbReference>
<dbReference type="FunFam" id="3.50.30.80:FF:000001">
    <property type="entry name" value="Dihydroxy-acid dehydratase"/>
    <property type="match status" value="1"/>
</dbReference>
<dbReference type="Gene3D" id="3.50.30.80">
    <property type="entry name" value="IlvD/EDD C-terminal domain-like"/>
    <property type="match status" value="1"/>
</dbReference>
<dbReference type="HAMAP" id="MF_00012">
    <property type="entry name" value="IlvD"/>
    <property type="match status" value="1"/>
</dbReference>
<dbReference type="InterPro" id="IPR042096">
    <property type="entry name" value="Dihydro-acid_dehy_C"/>
</dbReference>
<dbReference type="InterPro" id="IPR004404">
    <property type="entry name" value="DihydroxyA_deHydtase"/>
</dbReference>
<dbReference type="InterPro" id="IPR020558">
    <property type="entry name" value="DiOHA_6PGluconate_deHydtase_CS"/>
</dbReference>
<dbReference type="InterPro" id="IPR056740">
    <property type="entry name" value="ILV_EDD_C"/>
</dbReference>
<dbReference type="InterPro" id="IPR000581">
    <property type="entry name" value="ILV_EDD_N"/>
</dbReference>
<dbReference type="InterPro" id="IPR037237">
    <property type="entry name" value="IlvD/EDD_N"/>
</dbReference>
<dbReference type="NCBIfam" id="TIGR00110">
    <property type="entry name" value="ilvD"/>
    <property type="match status" value="1"/>
</dbReference>
<dbReference type="NCBIfam" id="NF009103">
    <property type="entry name" value="PRK12448.1"/>
    <property type="match status" value="1"/>
</dbReference>
<dbReference type="PANTHER" id="PTHR43661">
    <property type="entry name" value="D-XYLONATE DEHYDRATASE"/>
    <property type="match status" value="1"/>
</dbReference>
<dbReference type="PANTHER" id="PTHR43661:SF3">
    <property type="entry name" value="D-XYLONATE DEHYDRATASE YAGF-RELATED"/>
    <property type="match status" value="1"/>
</dbReference>
<dbReference type="Pfam" id="PF24877">
    <property type="entry name" value="ILV_EDD_C"/>
    <property type="match status" value="1"/>
</dbReference>
<dbReference type="Pfam" id="PF00920">
    <property type="entry name" value="ILVD_EDD_N"/>
    <property type="match status" value="1"/>
</dbReference>
<dbReference type="SUPFAM" id="SSF143975">
    <property type="entry name" value="IlvD/EDD N-terminal domain-like"/>
    <property type="match status" value="1"/>
</dbReference>
<dbReference type="SUPFAM" id="SSF52016">
    <property type="entry name" value="LeuD/IlvD-like"/>
    <property type="match status" value="1"/>
</dbReference>
<dbReference type="PROSITE" id="PS00886">
    <property type="entry name" value="ILVD_EDD_1"/>
    <property type="match status" value="1"/>
</dbReference>
<dbReference type="PROSITE" id="PS00887">
    <property type="entry name" value="ILVD_EDD_2"/>
    <property type="match status" value="1"/>
</dbReference>
<protein>
    <recommendedName>
        <fullName evidence="1">Dihydroxy-acid dehydratase</fullName>
        <shortName evidence="1">DAD</shortName>
        <ecNumber evidence="1">4.2.1.9</ecNumber>
    </recommendedName>
</protein>